<reference key="1">
    <citation type="journal article" date="2010" name="Proc. Natl. Acad. Sci. U.S.A.">
        <title>Genetic variation of melatonin productivity in laboratory mice under domestication.</title>
        <authorList>
            <person name="Kasahara T."/>
            <person name="Abe K."/>
            <person name="Mekada K."/>
            <person name="Yoshiki A."/>
            <person name="Kato T."/>
        </authorList>
    </citation>
    <scope>NUCLEOTIDE SEQUENCE [MRNA]</scope>
    <source>
        <tissue>Pineal gland</tissue>
    </source>
</reference>
<accession>D3KU67</accession>
<dbReference type="EC" id="2.1.1.4" evidence="2"/>
<dbReference type="EMBL" id="AB512672">
    <property type="protein sequence ID" value="BAI82193.1"/>
    <property type="molecule type" value="mRNA"/>
</dbReference>
<dbReference type="SMR" id="D3KU67"/>
<dbReference type="AGR" id="MGI:96090"/>
<dbReference type="MGI" id="MGI:96090">
    <property type="gene designation" value="Asmt"/>
</dbReference>
<dbReference type="UniPathway" id="UPA00837">
    <property type="reaction ID" value="UER00815"/>
</dbReference>
<dbReference type="GO" id="GO:0017096">
    <property type="term" value="F:acetylserotonin O-methyltransferase activity"/>
    <property type="evidence" value="ECO:0007669"/>
    <property type="project" value="UniProtKB-EC"/>
</dbReference>
<dbReference type="GO" id="GO:0046983">
    <property type="term" value="F:protein dimerization activity"/>
    <property type="evidence" value="ECO:0007669"/>
    <property type="project" value="InterPro"/>
</dbReference>
<dbReference type="GO" id="GO:0006629">
    <property type="term" value="P:lipid metabolic process"/>
    <property type="evidence" value="ECO:0007669"/>
    <property type="project" value="UniProtKB-KW"/>
</dbReference>
<dbReference type="GO" id="GO:0030187">
    <property type="term" value="P:melatonin biosynthetic process"/>
    <property type="evidence" value="ECO:0007669"/>
    <property type="project" value="UniProtKB-UniPathway"/>
</dbReference>
<dbReference type="GO" id="GO:0032259">
    <property type="term" value="P:methylation"/>
    <property type="evidence" value="ECO:0007669"/>
    <property type="project" value="UniProtKB-KW"/>
</dbReference>
<dbReference type="CDD" id="cd02440">
    <property type="entry name" value="AdoMet_MTases"/>
    <property type="match status" value="1"/>
</dbReference>
<dbReference type="FunFam" id="1.10.10.10:FF:000358">
    <property type="entry name" value="Acetylserotonin O-methyltransferase"/>
    <property type="match status" value="1"/>
</dbReference>
<dbReference type="FunFam" id="3.40.50.150:FF:000146">
    <property type="entry name" value="Acetylserotonin O-methyltransferase"/>
    <property type="match status" value="1"/>
</dbReference>
<dbReference type="Gene3D" id="3.40.50.150">
    <property type="entry name" value="Vaccinia Virus protein VP39"/>
    <property type="match status" value="1"/>
</dbReference>
<dbReference type="Gene3D" id="1.10.10.10">
    <property type="entry name" value="Winged helix-like DNA-binding domain superfamily/Winged helix DNA-binding domain"/>
    <property type="match status" value="1"/>
</dbReference>
<dbReference type="InterPro" id="IPR016461">
    <property type="entry name" value="COMT-like"/>
</dbReference>
<dbReference type="InterPro" id="IPR001077">
    <property type="entry name" value="O_MeTrfase_dom"/>
</dbReference>
<dbReference type="InterPro" id="IPR012967">
    <property type="entry name" value="Plant_O-MeTrfase_dimerisation"/>
</dbReference>
<dbReference type="InterPro" id="IPR029063">
    <property type="entry name" value="SAM-dependent_MTases_sf"/>
</dbReference>
<dbReference type="InterPro" id="IPR036388">
    <property type="entry name" value="WH-like_DNA-bd_sf"/>
</dbReference>
<dbReference type="InterPro" id="IPR036390">
    <property type="entry name" value="WH_DNA-bd_sf"/>
</dbReference>
<dbReference type="PANTHER" id="PTHR43712:SF2">
    <property type="entry name" value="O-METHYLTRANSFERASE CICE"/>
    <property type="match status" value="1"/>
</dbReference>
<dbReference type="PANTHER" id="PTHR43712">
    <property type="entry name" value="PUTATIVE (AFU_ORTHOLOGUE AFUA_4G14580)-RELATED"/>
    <property type="match status" value="1"/>
</dbReference>
<dbReference type="Pfam" id="PF08100">
    <property type="entry name" value="Dimerisation"/>
    <property type="match status" value="1"/>
</dbReference>
<dbReference type="Pfam" id="PF00891">
    <property type="entry name" value="Methyltransf_2"/>
    <property type="match status" value="1"/>
</dbReference>
<dbReference type="PIRSF" id="PIRSF005739">
    <property type="entry name" value="O-mtase"/>
    <property type="match status" value="1"/>
</dbReference>
<dbReference type="SUPFAM" id="SSF53335">
    <property type="entry name" value="S-adenosyl-L-methionine-dependent methyltransferases"/>
    <property type="match status" value="1"/>
</dbReference>
<dbReference type="SUPFAM" id="SSF46785">
    <property type="entry name" value="Winged helix' DNA-binding domain"/>
    <property type="match status" value="1"/>
</dbReference>
<dbReference type="PROSITE" id="PS51683">
    <property type="entry name" value="SAM_OMT_II"/>
    <property type="match status" value="1"/>
</dbReference>
<name>ASMT_MUSMM</name>
<comment type="function">
    <text evidence="2">Catalyzes the transfer of a methyl group onto N-acetylserotonin, producing melatonin (N-acetyl-5-methoxytryptamine).</text>
</comment>
<comment type="catalytic activity">
    <reaction evidence="2">
        <text>N-acetylserotonin + S-adenosyl-L-methionine = melatonin + S-adenosyl-L-homocysteine + H(+)</text>
        <dbReference type="Rhea" id="RHEA:15573"/>
        <dbReference type="ChEBI" id="CHEBI:15378"/>
        <dbReference type="ChEBI" id="CHEBI:16796"/>
        <dbReference type="ChEBI" id="CHEBI:17697"/>
        <dbReference type="ChEBI" id="CHEBI:57856"/>
        <dbReference type="ChEBI" id="CHEBI:59789"/>
        <dbReference type="EC" id="2.1.1.4"/>
    </reaction>
    <physiologicalReaction direction="left-to-right" evidence="2">
        <dbReference type="Rhea" id="RHEA:15574"/>
    </physiologicalReaction>
</comment>
<comment type="pathway">
    <text evidence="2">Aromatic compound metabolism; melatonin biosynthesis; melatonin from serotonin: step 1/2.</text>
</comment>
<comment type="subunit">
    <text evidence="1">Homodimer.</text>
</comment>
<comment type="miscellaneous">
    <text>Pineal melatonin synthesis is severely compromised in most inbred strains. In many inbred strains, genetic defects in ASMT have been identified. Melatonin production may have an impact on gonadal development, testis development being significantly promoted in melatonin-deficient C57BL/6J x Mus musculus molossinus animals.</text>
</comment>
<comment type="similarity">
    <text evidence="3">Belongs to the class I-like SAM-binding methyltransferase superfamily. Cation-independent O-methyltransferase family.</text>
</comment>
<proteinExistence type="evidence at transcript level"/>
<feature type="chain" id="PRO_0000414795" description="Acetylserotonin O-methyltransferase">
    <location>
        <begin position="1"/>
        <end position="387"/>
    </location>
</feature>
<feature type="region of interest" description="Disordered" evidence="4">
    <location>
        <begin position="355"/>
        <end position="387"/>
    </location>
</feature>
<feature type="compositionally biased region" description="Gly residues" evidence="4">
    <location>
        <begin position="356"/>
        <end position="370"/>
    </location>
</feature>
<feature type="active site" description="Proton donor/acceptor" evidence="1">
    <location>
        <position position="266"/>
    </location>
</feature>
<feature type="binding site" evidence="3">
    <location>
        <position position="153"/>
    </location>
    <ligand>
        <name>S-adenosyl-L-methionine</name>
        <dbReference type="ChEBI" id="CHEBI:59789"/>
    </ligand>
</feature>
<feature type="binding site" evidence="3">
    <location>
        <position position="170"/>
    </location>
    <ligand>
        <name>S-adenosyl-L-methionine</name>
        <dbReference type="ChEBI" id="CHEBI:59789"/>
    </ligand>
</feature>
<feature type="binding site" evidence="3">
    <location>
        <position position="216"/>
    </location>
    <ligand>
        <name>S-adenosyl-L-methionine</name>
        <dbReference type="ChEBI" id="CHEBI:59789"/>
    </ligand>
</feature>
<feature type="binding site" evidence="3">
    <location>
        <begin position="246"/>
        <end position="248"/>
    </location>
    <ligand>
        <name>S-adenosyl-L-methionine</name>
        <dbReference type="ChEBI" id="CHEBI:59789"/>
    </ligand>
</feature>
<feature type="binding site" evidence="3">
    <location>
        <position position="263"/>
    </location>
    <ligand>
        <name>S-adenosyl-L-methionine</name>
        <dbReference type="ChEBI" id="CHEBI:59789"/>
    </ligand>
</feature>
<feature type="binding site" evidence="1">
    <location>
        <position position="267"/>
    </location>
    <ligand>
        <name>substrate</name>
    </ligand>
</feature>
<feature type="binding site" evidence="1">
    <location>
        <position position="317"/>
    </location>
    <ligand>
        <name>substrate</name>
    </ligand>
</feature>
<evidence type="ECO:0000250" key="1"/>
<evidence type="ECO:0000250" key="2">
    <source>
        <dbReference type="UniProtKB" id="D3KU66"/>
    </source>
</evidence>
<evidence type="ECO:0000255" key="3">
    <source>
        <dbReference type="PROSITE-ProRule" id="PRU01020"/>
    </source>
</evidence>
<evidence type="ECO:0000256" key="4">
    <source>
        <dbReference type="SAM" id="MobiDB-lite"/>
    </source>
</evidence>
<sequence>MHRGRSASARQERDFRALMDLAHGFMASQVLFAGCALRVFDAAALGPVDAAALARSSGLSPRGTRLLLDACAGLGLLRRRRGAGPRGPAYTNSPLASTFLVAGSPLSQRSLLLYLAGTTYLCWGHLADGVREGRSQYARAVGVDADDPFTAIYRSEAERLLFMRGLQETWSLCGGRVLAAFDLSPFRVICDLGGGSGALARMAARLYPGSEVTVFETPDVVAAARAHFPPPADEDGAEPRVRFLSGDFFRSPLPPADLYVLARVLHDWADAACVELLRRVRGALRPGGAVLLVESVLSPGGAGPTRTLLLSLTMLLQARGRERTEAEYRALTARAGFSRLRLRRPRGPYHAMMAARGGGAGARSDGGGGEATSQTGSGTGREVGAQD</sequence>
<organism>
    <name type="scientific">Mus musculus molossinus</name>
    <name type="common">Japanese house mouse</name>
    <dbReference type="NCBI Taxonomy" id="57486"/>
    <lineage>
        <taxon>Eukaryota</taxon>
        <taxon>Metazoa</taxon>
        <taxon>Chordata</taxon>
        <taxon>Craniata</taxon>
        <taxon>Vertebrata</taxon>
        <taxon>Euteleostomi</taxon>
        <taxon>Mammalia</taxon>
        <taxon>Eutheria</taxon>
        <taxon>Euarchontoglires</taxon>
        <taxon>Glires</taxon>
        <taxon>Rodentia</taxon>
        <taxon>Myomorpha</taxon>
        <taxon>Muroidea</taxon>
        <taxon>Muridae</taxon>
        <taxon>Murinae</taxon>
        <taxon>Mus</taxon>
        <taxon>Mus</taxon>
    </lineage>
</organism>
<keyword id="KW-0443">Lipid metabolism</keyword>
<keyword id="KW-0471">Melatonin biosynthesis</keyword>
<keyword id="KW-0489">Methyltransferase</keyword>
<keyword id="KW-0949">S-adenosyl-L-methionine</keyword>
<keyword id="KW-0808">Transferase</keyword>
<gene>
    <name type="primary">Asmt</name>
    <name type="synonym">Hiomt</name>
</gene>
<protein>
    <recommendedName>
        <fullName>Acetylserotonin O-methyltransferase</fullName>
        <ecNumber evidence="2">2.1.1.4</ecNumber>
    </recommendedName>
    <alternativeName>
        <fullName>Hydroxyindole O-methyltransferase</fullName>
    </alternativeName>
</protein>